<sequence length="249" mass="27127">MAGHSKWANIKRQKARVDAKKGSLFTKLSRAIIVAARNGLPDPDANFRLRSAVEKAKAAGMPAETIERAIAKGSGNWADDSPLEEIRYEGYGPGGVAVLIEAMTDNRNRTAAEVREAFSKVGGSLGESGCVSWLFRQKGVISLEGVTDPEALLLAVAEAGGEDLKVEGTDAEVYCDYTLLEQVATYLKKEGYQVQEAAIRWIPSTEVHVEDPETAKLVLTLMERLDHLDDVQNVYANFEIDEALMESLA</sequence>
<gene>
    <name type="ordered locus">CYA_2259</name>
</gene>
<proteinExistence type="inferred from homology"/>
<comment type="subcellular location">
    <subcellularLocation>
        <location evidence="1">Cytoplasm</location>
    </subcellularLocation>
</comment>
<comment type="similarity">
    <text evidence="1">Belongs to the TACO1 family.</text>
</comment>
<reference key="1">
    <citation type="journal article" date="2007" name="ISME J.">
        <title>Population level functional diversity in a microbial community revealed by comparative genomic and metagenomic analyses.</title>
        <authorList>
            <person name="Bhaya D."/>
            <person name="Grossman A.R."/>
            <person name="Steunou A.-S."/>
            <person name="Khuri N."/>
            <person name="Cohan F.M."/>
            <person name="Hamamura N."/>
            <person name="Melendrez M.C."/>
            <person name="Bateson M.M."/>
            <person name="Ward D.M."/>
            <person name="Heidelberg J.F."/>
        </authorList>
    </citation>
    <scope>NUCLEOTIDE SEQUENCE [LARGE SCALE GENOMIC DNA]</scope>
    <source>
        <strain>JA-3-3Ab</strain>
    </source>
</reference>
<protein>
    <recommendedName>
        <fullName evidence="1">Probable transcriptional regulatory protein CYA_2259</fullName>
    </recommendedName>
</protein>
<name>Y2259_SYNJA</name>
<keyword id="KW-0963">Cytoplasm</keyword>
<keyword id="KW-0238">DNA-binding</keyword>
<keyword id="KW-0804">Transcription</keyword>
<keyword id="KW-0805">Transcription regulation</keyword>
<accession>Q2JSH9</accession>
<feature type="chain" id="PRO_0000257150" description="Probable transcriptional regulatory protein CYA_2259">
    <location>
        <begin position="1"/>
        <end position="249"/>
    </location>
</feature>
<evidence type="ECO:0000255" key="1">
    <source>
        <dbReference type="HAMAP-Rule" id="MF_00693"/>
    </source>
</evidence>
<organism>
    <name type="scientific">Synechococcus sp. (strain JA-3-3Ab)</name>
    <name type="common">Cyanobacteria bacterium Yellowstone A-Prime</name>
    <dbReference type="NCBI Taxonomy" id="321327"/>
    <lineage>
        <taxon>Bacteria</taxon>
        <taxon>Bacillati</taxon>
        <taxon>Cyanobacteriota</taxon>
        <taxon>Cyanophyceae</taxon>
        <taxon>Synechococcales</taxon>
        <taxon>Synechococcaceae</taxon>
        <taxon>Synechococcus</taxon>
    </lineage>
</organism>
<dbReference type="EMBL" id="CP000239">
    <property type="protein sequence ID" value="ABD00396.1"/>
    <property type="molecule type" value="Genomic_DNA"/>
</dbReference>
<dbReference type="RefSeq" id="WP_011431069.1">
    <property type="nucleotide sequence ID" value="NC_007775.1"/>
</dbReference>
<dbReference type="SMR" id="Q2JSH9"/>
<dbReference type="STRING" id="321327.CYA_2259"/>
<dbReference type="KEGG" id="cya:CYA_2259"/>
<dbReference type="eggNOG" id="COG0217">
    <property type="taxonomic scope" value="Bacteria"/>
</dbReference>
<dbReference type="HOGENOM" id="CLU_062974_2_2_3"/>
<dbReference type="OrthoDB" id="9781053at2"/>
<dbReference type="Proteomes" id="UP000008818">
    <property type="component" value="Chromosome"/>
</dbReference>
<dbReference type="GO" id="GO:0005829">
    <property type="term" value="C:cytosol"/>
    <property type="evidence" value="ECO:0007669"/>
    <property type="project" value="TreeGrafter"/>
</dbReference>
<dbReference type="GO" id="GO:0003677">
    <property type="term" value="F:DNA binding"/>
    <property type="evidence" value="ECO:0007669"/>
    <property type="project" value="UniProtKB-UniRule"/>
</dbReference>
<dbReference type="GO" id="GO:0006355">
    <property type="term" value="P:regulation of DNA-templated transcription"/>
    <property type="evidence" value="ECO:0007669"/>
    <property type="project" value="UniProtKB-UniRule"/>
</dbReference>
<dbReference type="FunFam" id="1.10.10.200:FF:000002">
    <property type="entry name" value="Probable transcriptional regulatory protein CLM62_37755"/>
    <property type="match status" value="1"/>
</dbReference>
<dbReference type="Gene3D" id="1.10.10.200">
    <property type="match status" value="1"/>
</dbReference>
<dbReference type="Gene3D" id="3.30.70.980">
    <property type="match status" value="2"/>
</dbReference>
<dbReference type="HAMAP" id="MF_00693">
    <property type="entry name" value="Transcrip_reg_TACO1"/>
    <property type="match status" value="1"/>
</dbReference>
<dbReference type="InterPro" id="IPR017856">
    <property type="entry name" value="Integrase-like_N"/>
</dbReference>
<dbReference type="InterPro" id="IPR048300">
    <property type="entry name" value="TACO1_YebC-like_2nd/3rd_dom"/>
</dbReference>
<dbReference type="InterPro" id="IPR049083">
    <property type="entry name" value="TACO1_YebC_N"/>
</dbReference>
<dbReference type="InterPro" id="IPR002876">
    <property type="entry name" value="Transcrip_reg_TACO1-like"/>
</dbReference>
<dbReference type="InterPro" id="IPR026564">
    <property type="entry name" value="Transcrip_reg_TACO1-like_dom3"/>
</dbReference>
<dbReference type="InterPro" id="IPR029072">
    <property type="entry name" value="YebC-like"/>
</dbReference>
<dbReference type="NCBIfam" id="NF001030">
    <property type="entry name" value="PRK00110.1"/>
    <property type="match status" value="1"/>
</dbReference>
<dbReference type="NCBIfam" id="NF009044">
    <property type="entry name" value="PRK12378.1"/>
    <property type="match status" value="1"/>
</dbReference>
<dbReference type="NCBIfam" id="TIGR01033">
    <property type="entry name" value="YebC/PmpR family DNA-binding transcriptional regulator"/>
    <property type="match status" value="1"/>
</dbReference>
<dbReference type="PANTHER" id="PTHR12532:SF6">
    <property type="entry name" value="TRANSCRIPTIONAL REGULATORY PROTEIN YEBC-RELATED"/>
    <property type="match status" value="1"/>
</dbReference>
<dbReference type="PANTHER" id="PTHR12532">
    <property type="entry name" value="TRANSLATIONAL ACTIVATOR OF CYTOCHROME C OXIDASE 1"/>
    <property type="match status" value="1"/>
</dbReference>
<dbReference type="Pfam" id="PF20772">
    <property type="entry name" value="TACO1_YebC_N"/>
    <property type="match status" value="1"/>
</dbReference>
<dbReference type="Pfam" id="PF01709">
    <property type="entry name" value="Transcrip_reg"/>
    <property type="match status" value="1"/>
</dbReference>
<dbReference type="SUPFAM" id="SSF75625">
    <property type="entry name" value="YebC-like"/>
    <property type="match status" value="1"/>
</dbReference>